<comment type="function">
    <text evidence="1">Involved in the gluconeogenesis. Catalyzes the conversion of oxaloacetate (OAA) to phosphoenolpyruvate (PEP) through direct phosphoryl transfer between the nucleoside triphosphate and OAA.</text>
</comment>
<comment type="catalytic activity">
    <reaction evidence="1">
        <text>oxaloacetate + ATP = phosphoenolpyruvate + ADP + CO2</text>
        <dbReference type="Rhea" id="RHEA:18617"/>
        <dbReference type="ChEBI" id="CHEBI:16452"/>
        <dbReference type="ChEBI" id="CHEBI:16526"/>
        <dbReference type="ChEBI" id="CHEBI:30616"/>
        <dbReference type="ChEBI" id="CHEBI:58702"/>
        <dbReference type="ChEBI" id="CHEBI:456216"/>
        <dbReference type="EC" id="4.1.1.49"/>
    </reaction>
</comment>
<comment type="cofactor">
    <cofactor evidence="1">
        <name>Mn(2+)</name>
        <dbReference type="ChEBI" id="CHEBI:29035"/>
    </cofactor>
    <text evidence="1">Binds 1 Mn(2+) ion per subunit.</text>
</comment>
<comment type="pathway">
    <text evidence="1">Carbohydrate biosynthesis; gluconeogenesis.</text>
</comment>
<comment type="subunit">
    <text evidence="1">Monomer.</text>
</comment>
<comment type="subcellular location">
    <subcellularLocation>
        <location evidence="1">Cytoplasm</location>
    </subcellularLocation>
</comment>
<comment type="similarity">
    <text evidence="1">Belongs to the phosphoenolpyruvate carboxykinase (ATP) family.</text>
</comment>
<feature type="chain" id="PRO_0000203854" description="Phosphoenolpyruvate carboxykinase (ATP)">
    <location>
        <begin position="1"/>
        <end position="542"/>
    </location>
</feature>
<feature type="binding site" evidence="1">
    <location>
        <position position="67"/>
    </location>
    <ligand>
        <name>substrate</name>
    </ligand>
</feature>
<feature type="binding site" evidence="1">
    <location>
        <position position="208"/>
    </location>
    <ligand>
        <name>substrate</name>
    </ligand>
</feature>
<feature type="binding site" evidence="1">
    <location>
        <position position="214"/>
    </location>
    <ligand>
        <name>ATP</name>
        <dbReference type="ChEBI" id="CHEBI:30616"/>
    </ligand>
</feature>
<feature type="binding site" evidence="1">
    <location>
        <position position="214"/>
    </location>
    <ligand>
        <name>Mn(2+)</name>
        <dbReference type="ChEBI" id="CHEBI:29035"/>
    </ligand>
</feature>
<feature type="binding site" evidence="1">
    <location>
        <position position="214"/>
    </location>
    <ligand>
        <name>substrate</name>
    </ligand>
</feature>
<feature type="binding site" evidence="1">
    <location>
        <position position="233"/>
    </location>
    <ligand>
        <name>ATP</name>
        <dbReference type="ChEBI" id="CHEBI:30616"/>
    </ligand>
</feature>
<feature type="binding site" evidence="1">
    <location>
        <position position="233"/>
    </location>
    <ligand>
        <name>Mn(2+)</name>
        <dbReference type="ChEBI" id="CHEBI:29035"/>
    </ligand>
</feature>
<feature type="binding site" evidence="1">
    <location>
        <begin position="249"/>
        <end position="257"/>
    </location>
    <ligand>
        <name>ATP</name>
        <dbReference type="ChEBI" id="CHEBI:30616"/>
    </ligand>
</feature>
<feature type="binding site" evidence="1">
    <location>
        <position position="270"/>
    </location>
    <ligand>
        <name>Mn(2+)</name>
        <dbReference type="ChEBI" id="CHEBI:29035"/>
    </ligand>
</feature>
<feature type="binding site" evidence="1">
    <location>
        <position position="298"/>
    </location>
    <ligand>
        <name>ATP</name>
        <dbReference type="ChEBI" id="CHEBI:30616"/>
    </ligand>
</feature>
<feature type="binding site" evidence="1">
    <location>
        <position position="334"/>
    </location>
    <ligand>
        <name>ATP</name>
        <dbReference type="ChEBI" id="CHEBI:30616"/>
    </ligand>
</feature>
<feature type="binding site" evidence="1">
    <location>
        <position position="334"/>
    </location>
    <ligand>
        <name>substrate</name>
    </ligand>
</feature>
<feature type="binding site" evidence="1">
    <location>
        <begin position="450"/>
        <end position="451"/>
    </location>
    <ligand>
        <name>ATP</name>
        <dbReference type="ChEBI" id="CHEBI:30616"/>
    </ligand>
</feature>
<feature type="binding site" evidence="1">
    <location>
        <position position="456"/>
    </location>
    <ligand>
        <name>ATP</name>
        <dbReference type="ChEBI" id="CHEBI:30616"/>
    </ligand>
</feature>
<gene>
    <name evidence="1" type="primary">pckA</name>
    <name type="ordered locus">VC_2738</name>
</gene>
<dbReference type="EC" id="4.1.1.49" evidence="1"/>
<dbReference type="EMBL" id="AE003852">
    <property type="protein sequence ID" value="AAF95877.1"/>
    <property type="molecule type" value="Genomic_DNA"/>
</dbReference>
<dbReference type="PIR" id="B82039">
    <property type="entry name" value="B82039"/>
</dbReference>
<dbReference type="RefSeq" id="NP_232364.1">
    <property type="nucleotide sequence ID" value="NC_002505.1"/>
</dbReference>
<dbReference type="RefSeq" id="WP_000217613.1">
    <property type="nucleotide sequence ID" value="NZ_LT906614.1"/>
</dbReference>
<dbReference type="SMR" id="Q9KNK0"/>
<dbReference type="STRING" id="243277.VC_2738"/>
<dbReference type="DNASU" id="2614901"/>
<dbReference type="EnsemblBacteria" id="AAF95877">
    <property type="protein sequence ID" value="AAF95877"/>
    <property type="gene ID" value="VC_2738"/>
</dbReference>
<dbReference type="GeneID" id="69718668"/>
<dbReference type="KEGG" id="vch:VC_2738"/>
<dbReference type="PATRIC" id="fig|243277.26.peg.2613"/>
<dbReference type="eggNOG" id="COG1866">
    <property type="taxonomic scope" value="Bacteria"/>
</dbReference>
<dbReference type="HOGENOM" id="CLU_018247_0_1_6"/>
<dbReference type="UniPathway" id="UPA00138"/>
<dbReference type="Proteomes" id="UP000000584">
    <property type="component" value="Chromosome 1"/>
</dbReference>
<dbReference type="GO" id="GO:0005829">
    <property type="term" value="C:cytosol"/>
    <property type="evidence" value="ECO:0000318"/>
    <property type="project" value="GO_Central"/>
</dbReference>
<dbReference type="GO" id="GO:0005524">
    <property type="term" value="F:ATP binding"/>
    <property type="evidence" value="ECO:0007669"/>
    <property type="project" value="UniProtKB-UniRule"/>
</dbReference>
<dbReference type="GO" id="GO:0046872">
    <property type="term" value="F:metal ion binding"/>
    <property type="evidence" value="ECO:0007669"/>
    <property type="project" value="UniProtKB-KW"/>
</dbReference>
<dbReference type="GO" id="GO:0004612">
    <property type="term" value="F:phosphoenolpyruvate carboxykinase (ATP) activity"/>
    <property type="evidence" value="ECO:0000318"/>
    <property type="project" value="GO_Central"/>
</dbReference>
<dbReference type="GO" id="GO:0006094">
    <property type="term" value="P:gluconeogenesis"/>
    <property type="evidence" value="ECO:0000318"/>
    <property type="project" value="GO_Central"/>
</dbReference>
<dbReference type="CDD" id="cd00484">
    <property type="entry name" value="PEPCK_ATP"/>
    <property type="match status" value="1"/>
</dbReference>
<dbReference type="FunFam" id="2.170.8.10:FF:000001">
    <property type="entry name" value="Phosphoenolpyruvate carboxykinase (ATP)"/>
    <property type="match status" value="1"/>
</dbReference>
<dbReference type="FunFam" id="3.40.449.10:FF:000001">
    <property type="entry name" value="Phosphoenolpyruvate carboxykinase (ATP)"/>
    <property type="match status" value="1"/>
</dbReference>
<dbReference type="Gene3D" id="3.90.228.20">
    <property type="match status" value="1"/>
</dbReference>
<dbReference type="Gene3D" id="3.40.449.10">
    <property type="entry name" value="Phosphoenolpyruvate Carboxykinase, domain 1"/>
    <property type="match status" value="1"/>
</dbReference>
<dbReference type="Gene3D" id="2.170.8.10">
    <property type="entry name" value="Phosphoenolpyruvate Carboxykinase, domain 2"/>
    <property type="match status" value="1"/>
</dbReference>
<dbReference type="HAMAP" id="MF_00453">
    <property type="entry name" value="PEPCK_ATP"/>
    <property type="match status" value="1"/>
</dbReference>
<dbReference type="InterPro" id="IPR001272">
    <property type="entry name" value="PEP_carboxykinase_ATP"/>
</dbReference>
<dbReference type="InterPro" id="IPR013035">
    <property type="entry name" value="PEP_carboxykinase_C"/>
</dbReference>
<dbReference type="InterPro" id="IPR008210">
    <property type="entry name" value="PEP_carboxykinase_N"/>
</dbReference>
<dbReference type="InterPro" id="IPR015994">
    <property type="entry name" value="PEPCK_ATP_CS"/>
</dbReference>
<dbReference type="NCBIfam" id="TIGR00224">
    <property type="entry name" value="pckA"/>
    <property type="match status" value="1"/>
</dbReference>
<dbReference type="NCBIfam" id="NF006819">
    <property type="entry name" value="PRK09344.1-1"/>
    <property type="match status" value="1"/>
</dbReference>
<dbReference type="NCBIfam" id="NF006820">
    <property type="entry name" value="PRK09344.1-2"/>
    <property type="match status" value="1"/>
</dbReference>
<dbReference type="NCBIfam" id="NF006821">
    <property type="entry name" value="PRK09344.1-3"/>
    <property type="match status" value="1"/>
</dbReference>
<dbReference type="PANTHER" id="PTHR30031:SF0">
    <property type="entry name" value="PHOSPHOENOLPYRUVATE CARBOXYKINASE (ATP)"/>
    <property type="match status" value="1"/>
</dbReference>
<dbReference type="PANTHER" id="PTHR30031">
    <property type="entry name" value="PHOSPHOENOLPYRUVATE CARBOXYKINASE ATP"/>
    <property type="match status" value="1"/>
</dbReference>
<dbReference type="Pfam" id="PF01293">
    <property type="entry name" value="PEPCK_ATP"/>
    <property type="match status" value="1"/>
</dbReference>
<dbReference type="PIRSF" id="PIRSF006294">
    <property type="entry name" value="PEP_crbxkin"/>
    <property type="match status" value="1"/>
</dbReference>
<dbReference type="SUPFAM" id="SSF68923">
    <property type="entry name" value="PEP carboxykinase N-terminal domain"/>
    <property type="match status" value="1"/>
</dbReference>
<dbReference type="SUPFAM" id="SSF53795">
    <property type="entry name" value="PEP carboxykinase-like"/>
    <property type="match status" value="1"/>
</dbReference>
<dbReference type="PROSITE" id="PS00532">
    <property type="entry name" value="PEPCK_ATP"/>
    <property type="match status" value="1"/>
</dbReference>
<sequence length="542" mass="59844">MTVMEHTKAAQIDLAQYGITGVTELVRNPSYEMLFAEETRSDLEGYERGVVTELGAVAVDTGIFTGRSPKDKFIVKDDTTRDTLWWTSDKAKNDNKPINQEVWNDLKALVTKQLSGKRVFVLDGYCGANADTRLSVRFITEVAWQAHFVKNMFIRPSEEELAHFKPDFVVMNGAKCTNAKWKEHGLNSENFTVFNLTERMQLIGGTWYGGEMKKGMFAMMNYFLPLQGIASMHCSANMGKAGDVAIFFGLSGTGKTTLSTDPKRALIGDDEHGWDDDGVFNFEGGCYAKTIKLSKEAEPDIYNAIRRDALLENVTVRSDGSIDFDDGSKTENTRVSYPIYHIDNIVKPVSKGGHATKVIFLSADAFGVLPPVSKLTPEQTKYHFLSGFTAKLAGTERGITEPTPTFSACFGAAFLTLHPTQYAEVLVKRMEAAGAEAYLVNTGWNGSGKRISIKDTRGIIDAILDGSIEKAETKHIPIFNLQVPTALPGVDPMILDPRDTYVDPLQWESKAKDLATRFINNFDKYTDNAEGKALVAAGPKLD</sequence>
<proteinExistence type="inferred from homology"/>
<name>PCKA_VIBCH</name>
<reference key="1">
    <citation type="journal article" date="2000" name="Nature">
        <title>DNA sequence of both chromosomes of the cholera pathogen Vibrio cholerae.</title>
        <authorList>
            <person name="Heidelberg J.F."/>
            <person name="Eisen J.A."/>
            <person name="Nelson W.C."/>
            <person name="Clayton R.A."/>
            <person name="Gwinn M.L."/>
            <person name="Dodson R.J."/>
            <person name="Haft D.H."/>
            <person name="Hickey E.K."/>
            <person name="Peterson J.D."/>
            <person name="Umayam L.A."/>
            <person name="Gill S.R."/>
            <person name="Nelson K.E."/>
            <person name="Read T.D."/>
            <person name="Tettelin H."/>
            <person name="Richardson D.L."/>
            <person name="Ermolaeva M.D."/>
            <person name="Vamathevan J.J."/>
            <person name="Bass S."/>
            <person name="Qin H."/>
            <person name="Dragoi I."/>
            <person name="Sellers P."/>
            <person name="McDonald L.A."/>
            <person name="Utterback T.R."/>
            <person name="Fleischmann R.D."/>
            <person name="Nierman W.C."/>
            <person name="White O."/>
            <person name="Salzberg S.L."/>
            <person name="Smith H.O."/>
            <person name="Colwell R.R."/>
            <person name="Mekalanos J.J."/>
            <person name="Venter J.C."/>
            <person name="Fraser C.M."/>
        </authorList>
    </citation>
    <scope>NUCLEOTIDE SEQUENCE [LARGE SCALE GENOMIC DNA]</scope>
    <source>
        <strain>ATCC 39315 / El Tor Inaba N16961</strain>
    </source>
</reference>
<keyword id="KW-0067">ATP-binding</keyword>
<keyword id="KW-0963">Cytoplasm</keyword>
<keyword id="KW-0210">Decarboxylase</keyword>
<keyword id="KW-0312">Gluconeogenesis</keyword>
<keyword id="KW-0456">Lyase</keyword>
<keyword id="KW-0464">Manganese</keyword>
<keyword id="KW-0479">Metal-binding</keyword>
<keyword id="KW-0547">Nucleotide-binding</keyword>
<keyword id="KW-1185">Reference proteome</keyword>
<accession>Q9KNK0</accession>
<organism>
    <name type="scientific">Vibrio cholerae serotype O1 (strain ATCC 39315 / El Tor Inaba N16961)</name>
    <dbReference type="NCBI Taxonomy" id="243277"/>
    <lineage>
        <taxon>Bacteria</taxon>
        <taxon>Pseudomonadati</taxon>
        <taxon>Pseudomonadota</taxon>
        <taxon>Gammaproteobacteria</taxon>
        <taxon>Vibrionales</taxon>
        <taxon>Vibrionaceae</taxon>
        <taxon>Vibrio</taxon>
    </lineage>
</organism>
<evidence type="ECO:0000255" key="1">
    <source>
        <dbReference type="HAMAP-Rule" id="MF_00453"/>
    </source>
</evidence>
<protein>
    <recommendedName>
        <fullName evidence="1">Phosphoenolpyruvate carboxykinase (ATP)</fullName>
        <shortName evidence="1">PCK</shortName>
        <shortName evidence="1">PEP carboxykinase</shortName>
        <shortName evidence="1">PEPCK</shortName>
        <ecNumber evidence="1">4.1.1.49</ecNumber>
    </recommendedName>
</protein>